<sequence>MSHRRQTAQEGGQMEGQAACFAREAPAVAVDLLGAHLQVRGVGGRIVETEAYTPDDPASHSFRGPTPRNAAMFGPPGCAYVYLSYGIHLCLNVVCAPGHAVLIRALEPTEGLAQMAARRGTDVARLLCSGPGRIGQALGLTLADDGTAFGTRGFAVRWGAPVAAGEILCGPRIGISRAADMPWRFGLRGSPCLSRRF</sequence>
<name>3MGH_CERS4</name>
<comment type="similarity">
    <text evidence="1">Belongs to the DNA glycosylase MPG family.</text>
</comment>
<comment type="sequence caution" evidence="2">
    <conflict type="erroneous initiation">
        <sequence resource="EMBL-CDS" id="ABA78540"/>
    </conflict>
</comment>
<keyword id="KW-0227">DNA damage</keyword>
<keyword id="KW-0234">DNA repair</keyword>
<keyword id="KW-0378">Hydrolase</keyword>
<keyword id="KW-1185">Reference proteome</keyword>
<accession>Q3J3U4</accession>
<dbReference type="EC" id="3.2.2.-" evidence="1"/>
<dbReference type="EMBL" id="CP000143">
    <property type="protein sequence ID" value="ABA78540.1"/>
    <property type="status" value="ALT_INIT"/>
    <property type="molecule type" value="Genomic_DNA"/>
</dbReference>
<dbReference type="RefSeq" id="WP_011337446.1">
    <property type="nucleotide sequence ID" value="NZ_CP030271.1"/>
</dbReference>
<dbReference type="RefSeq" id="YP_352441.1">
    <property type="nucleotide sequence ID" value="NC_007493.2"/>
</dbReference>
<dbReference type="SMR" id="Q3J3U4"/>
<dbReference type="STRING" id="272943.RSP_2381"/>
<dbReference type="EnsemblBacteria" id="ABA78540">
    <property type="protein sequence ID" value="ABA78540"/>
    <property type="gene ID" value="RSP_2381"/>
</dbReference>
<dbReference type="GeneID" id="3719976"/>
<dbReference type="KEGG" id="rsp:RSP_2381"/>
<dbReference type="PATRIC" id="fig|272943.9.peg.1298"/>
<dbReference type="eggNOG" id="COG2094">
    <property type="taxonomic scope" value="Bacteria"/>
</dbReference>
<dbReference type="OrthoDB" id="9794313at2"/>
<dbReference type="Proteomes" id="UP000002703">
    <property type="component" value="Chromosome 1"/>
</dbReference>
<dbReference type="GO" id="GO:0003905">
    <property type="term" value="F:alkylbase DNA N-glycosylase activity"/>
    <property type="evidence" value="ECO:0007669"/>
    <property type="project" value="InterPro"/>
</dbReference>
<dbReference type="GO" id="GO:0003677">
    <property type="term" value="F:DNA binding"/>
    <property type="evidence" value="ECO:0007669"/>
    <property type="project" value="InterPro"/>
</dbReference>
<dbReference type="GO" id="GO:0006284">
    <property type="term" value="P:base-excision repair"/>
    <property type="evidence" value="ECO:0007669"/>
    <property type="project" value="InterPro"/>
</dbReference>
<dbReference type="CDD" id="cd00540">
    <property type="entry name" value="AAG"/>
    <property type="match status" value="1"/>
</dbReference>
<dbReference type="Gene3D" id="3.10.300.10">
    <property type="entry name" value="Methylpurine-DNA glycosylase (MPG)"/>
    <property type="match status" value="1"/>
</dbReference>
<dbReference type="HAMAP" id="MF_00527">
    <property type="entry name" value="3MGH"/>
    <property type="match status" value="1"/>
</dbReference>
<dbReference type="InterPro" id="IPR011034">
    <property type="entry name" value="Formyl_transferase-like_C_sf"/>
</dbReference>
<dbReference type="InterPro" id="IPR003180">
    <property type="entry name" value="MPG"/>
</dbReference>
<dbReference type="InterPro" id="IPR036995">
    <property type="entry name" value="MPG_sf"/>
</dbReference>
<dbReference type="NCBIfam" id="TIGR00567">
    <property type="entry name" value="3mg"/>
    <property type="match status" value="1"/>
</dbReference>
<dbReference type="NCBIfam" id="NF002003">
    <property type="entry name" value="PRK00802.1-3"/>
    <property type="match status" value="1"/>
</dbReference>
<dbReference type="PANTHER" id="PTHR10429">
    <property type="entry name" value="DNA-3-METHYLADENINE GLYCOSYLASE"/>
    <property type="match status" value="1"/>
</dbReference>
<dbReference type="PANTHER" id="PTHR10429:SF0">
    <property type="entry name" value="DNA-3-METHYLADENINE GLYCOSYLASE"/>
    <property type="match status" value="1"/>
</dbReference>
<dbReference type="Pfam" id="PF02245">
    <property type="entry name" value="Pur_DNA_glyco"/>
    <property type="match status" value="1"/>
</dbReference>
<dbReference type="SUPFAM" id="SSF50486">
    <property type="entry name" value="FMT C-terminal domain-like"/>
    <property type="match status" value="1"/>
</dbReference>
<organism>
    <name type="scientific">Cereibacter sphaeroides (strain ATCC 17023 / DSM 158 / JCM 6121 / CCUG 31486 / LMG 2827 / NBRC 12203 / NCIMB 8253 / ATH 2.4.1.)</name>
    <name type="common">Rhodobacter sphaeroides</name>
    <dbReference type="NCBI Taxonomy" id="272943"/>
    <lineage>
        <taxon>Bacteria</taxon>
        <taxon>Pseudomonadati</taxon>
        <taxon>Pseudomonadota</taxon>
        <taxon>Alphaproteobacteria</taxon>
        <taxon>Rhodobacterales</taxon>
        <taxon>Paracoccaceae</taxon>
        <taxon>Cereibacter</taxon>
    </lineage>
</organism>
<protein>
    <recommendedName>
        <fullName evidence="1">Putative 3-methyladenine DNA glycosylase</fullName>
        <ecNumber evidence="1">3.2.2.-</ecNumber>
    </recommendedName>
</protein>
<reference key="1">
    <citation type="submission" date="2005-09" db="EMBL/GenBank/DDBJ databases">
        <title>Complete sequence of chromosome 1 of Rhodobacter sphaeroides 2.4.1.</title>
        <authorList>
            <person name="Copeland A."/>
            <person name="Lucas S."/>
            <person name="Lapidus A."/>
            <person name="Barry K."/>
            <person name="Detter J.C."/>
            <person name="Glavina T."/>
            <person name="Hammon N."/>
            <person name="Israni S."/>
            <person name="Pitluck S."/>
            <person name="Richardson P."/>
            <person name="Mackenzie C."/>
            <person name="Choudhary M."/>
            <person name="Larimer F."/>
            <person name="Hauser L.J."/>
            <person name="Land M."/>
            <person name="Donohue T.J."/>
            <person name="Kaplan S."/>
        </authorList>
    </citation>
    <scope>NUCLEOTIDE SEQUENCE [LARGE SCALE GENOMIC DNA]</scope>
    <source>
        <strain>ATCC 17023 / DSM 158 / JCM 6121 / CCUG 31486 / LMG 2827 / NBRC 12203 / NCIMB 8253 / ATH 2.4.1.</strain>
    </source>
</reference>
<proteinExistence type="inferred from homology"/>
<evidence type="ECO:0000255" key="1">
    <source>
        <dbReference type="HAMAP-Rule" id="MF_00527"/>
    </source>
</evidence>
<evidence type="ECO:0000305" key="2"/>
<feature type="chain" id="PRO_0000265048" description="Putative 3-methyladenine DNA glycosylase">
    <location>
        <begin position="1"/>
        <end position="197"/>
    </location>
</feature>
<gene>
    <name type="ordered locus">RHOS4_09720</name>
    <name type="ORF">RSP_2381</name>
</gene>